<dbReference type="EMBL" id="AM295250">
    <property type="protein sequence ID" value="CAL28630.1"/>
    <property type="molecule type" value="Genomic_DNA"/>
</dbReference>
<dbReference type="RefSeq" id="WP_015900968.1">
    <property type="nucleotide sequence ID" value="NC_012121.1"/>
</dbReference>
<dbReference type="SMR" id="B9DM36"/>
<dbReference type="GeneID" id="93794183"/>
<dbReference type="KEGG" id="sca:SCA_1724"/>
<dbReference type="eggNOG" id="COG0198">
    <property type="taxonomic scope" value="Bacteria"/>
</dbReference>
<dbReference type="HOGENOM" id="CLU_093315_2_0_9"/>
<dbReference type="OrthoDB" id="9807419at2"/>
<dbReference type="BioCyc" id="SCAR396513:SCA_RS08785-MONOMER"/>
<dbReference type="Proteomes" id="UP000000444">
    <property type="component" value="Chromosome"/>
</dbReference>
<dbReference type="GO" id="GO:1990904">
    <property type="term" value="C:ribonucleoprotein complex"/>
    <property type="evidence" value="ECO:0007669"/>
    <property type="project" value="UniProtKB-KW"/>
</dbReference>
<dbReference type="GO" id="GO:0005840">
    <property type="term" value="C:ribosome"/>
    <property type="evidence" value="ECO:0007669"/>
    <property type="project" value="UniProtKB-KW"/>
</dbReference>
<dbReference type="GO" id="GO:0019843">
    <property type="term" value="F:rRNA binding"/>
    <property type="evidence" value="ECO:0007669"/>
    <property type="project" value="UniProtKB-UniRule"/>
</dbReference>
<dbReference type="GO" id="GO:0003735">
    <property type="term" value="F:structural constituent of ribosome"/>
    <property type="evidence" value="ECO:0007669"/>
    <property type="project" value="InterPro"/>
</dbReference>
<dbReference type="GO" id="GO:0006412">
    <property type="term" value="P:translation"/>
    <property type="evidence" value="ECO:0007669"/>
    <property type="project" value="UniProtKB-UniRule"/>
</dbReference>
<dbReference type="CDD" id="cd06089">
    <property type="entry name" value="KOW_RPL26"/>
    <property type="match status" value="1"/>
</dbReference>
<dbReference type="FunFam" id="2.30.30.30:FF:000004">
    <property type="entry name" value="50S ribosomal protein L24"/>
    <property type="match status" value="1"/>
</dbReference>
<dbReference type="Gene3D" id="2.30.30.30">
    <property type="match status" value="1"/>
</dbReference>
<dbReference type="HAMAP" id="MF_01326_B">
    <property type="entry name" value="Ribosomal_uL24_B"/>
    <property type="match status" value="1"/>
</dbReference>
<dbReference type="InterPro" id="IPR005824">
    <property type="entry name" value="KOW"/>
</dbReference>
<dbReference type="InterPro" id="IPR014722">
    <property type="entry name" value="Rib_uL2_dom2"/>
</dbReference>
<dbReference type="InterPro" id="IPR003256">
    <property type="entry name" value="Ribosomal_uL24"/>
</dbReference>
<dbReference type="InterPro" id="IPR005825">
    <property type="entry name" value="Ribosomal_uL24_CS"/>
</dbReference>
<dbReference type="InterPro" id="IPR041988">
    <property type="entry name" value="Ribosomal_uL24_KOW"/>
</dbReference>
<dbReference type="InterPro" id="IPR008991">
    <property type="entry name" value="Translation_prot_SH3-like_sf"/>
</dbReference>
<dbReference type="NCBIfam" id="TIGR01079">
    <property type="entry name" value="rplX_bact"/>
    <property type="match status" value="1"/>
</dbReference>
<dbReference type="PANTHER" id="PTHR12903">
    <property type="entry name" value="MITOCHONDRIAL RIBOSOMAL PROTEIN L24"/>
    <property type="match status" value="1"/>
</dbReference>
<dbReference type="Pfam" id="PF00467">
    <property type="entry name" value="KOW"/>
    <property type="match status" value="1"/>
</dbReference>
<dbReference type="Pfam" id="PF17136">
    <property type="entry name" value="ribosomal_L24"/>
    <property type="match status" value="1"/>
</dbReference>
<dbReference type="SMART" id="SM00739">
    <property type="entry name" value="KOW"/>
    <property type="match status" value="1"/>
</dbReference>
<dbReference type="SUPFAM" id="SSF50104">
    <property type="entry name" value="Translation proteins SH3-like domain"/>
    <property type="match status" value="1"/>
</dbReference>
<dbReference type="PROSITE" id="PS01108">
    <property type="entry name" value="RIBOSOMAL_L24"/>
    <property type="match status" value="1"/>
</dbReference>
<organism>
    <name type="scientific">Staphylococcus carnosus (strain TM300)</name>
    <dbReference type="NCBI Taxonomy" id="396513"/>
    <lineage>
        <taxon>Bacteria</taxon>
        <taxon>Bacillati</taxon>
        <taxon>Bacillota</taxon>
        <taxon>Bacilli</taxon>
        <taxon>Bacillales</taxon>
        <taxon>Staphylococcaceae</taxon>
        <taxon>Staphylococcus</taxon>
    </lineage>
</organism>
<feature type="chain" id="PRO_1000165963" description="Large ribosomal subunit protein uL24">
    <location>
        <begin position="1"/>
        <end position="105"/>
    </location>
</feature>
<reference key="1">
    <citation type="journal article" date="2009" name="Appl. Environ. Microbiol.">
        <title>Genome analysis of the meat starter culture bacterium Staphylococcus carnosus TM300.</title>
        <authorList>
            <person name="Rosenstein R."/>
            <person name="Nerz C."/>
            <person name="Biswas L."/>
            <person name="Resch A."/>
            <person name="Raddatz G."/>
            <person name="Schuster S.C."/>
            <person name="Goetz F."/>
        </authorList>
    </citation>
    <scope>NUCLEOTIDE SEQUENCE [LARGE SCALE GENOMIC DNA]</scope>
    <source>
        <strain>TM300</strain>
    </source>
</reference>
<accession>B9DM36</accession>
<evidence type="ECO:0000255" key="1">
    <source>
        <dbReference type="HAMAP-Rule" id="MF_01326"/>
    </source>
</evidence>
<evidence type="ECO:0000305" key="2"/>
<keyword id="KW-1185">Reference proteome</keyword>
<keyword id="KW-0687">Ribonucleoprotein</keyword>
<keyword id="KW-0689">Ribosomal protein</keyword>
<keyword id="KW-0694">RNA-binding</keyword>
<keyword id="KW-0699">rRNA-binding</keyword>
<proteinExistence type="inferred from homology"/>
<protein>
    <recommendedName>
        <fullName evidence="1">Large ribosomal subunit protein uL24</fullName>
    </recommendedName>
    <alternativeName>
        <fullName evidence="2">50S ribosomal protein L24</fullName>
    </alternativeName>
</protein>
<sequence length="105" mass="11583">MHIKKGDNVIVISGKDKGKTGVVQSTEPKKDRVVVEGVNIIKKHQKPTQFNPEGGILETEAPIHVSNVQLLDPKTNEPTRVGYKFVDGKKIRIAKKSGEEIKSNN</sequence>
<gene>
    <name evidence="1" type="primary">rplX</name>
    <name type="ordered locus">Sca_1724</name>
</gene>
<comment type="function">
    <text evidence="1">One of two assembly initiator proteins, it binds directly to the 5'-end of the 23S rRNA, where it nucleates assembly of the 50S subunit.</text>
</comment>
<comment type="function">
    <text evidence="1">One of the proteins that surrounds the polypeptide exit tunnel on the outside of the subunit.</text>
</comment>
<comment type="subunit">
    <text evidence="1">Part of the 50S ribosomal subunit.</text>
</comment>
<comment type="similarity">
    <text evidence="1">Belongs to the universal ribosomal protein uL24 family.</text>
</comment>
<name>RL24_STACT</name>